<comment type="function">
    <text>Reversibly catalyzes the transfer of phosphate between ATP and various phosphogens (e.g. creatine phosphate). Creatine kinase isoenzymes play a central role in energy transduction in tissues with large, fluctuating energy demands, such as skeletal muscle, heart, brain and spermatozoa.</text>
</comment>
<comment type="catalytic activity">
    <reaction evidence="3">
        <text>creatine + ATP = N-phosphocreatine + ADP + H(+)</text>
        <dbReference type="Rhea" id="RHEA:17157"/>
        <dbReference type="ChEBI" id="CHEBI:15378"/>
        <dbReference type="ChEBI" id="CHEBI:30616"/>
        <dbReference type="ChEBI" id="CHEBI:57947"/>
        <dbReference type="ChEBI" id="CHEBI:58092"/>
        <dbReference type="ChEBI" id="CHEBI:456216"/>
        <dbReference type="EC" id="2.7.3.2"/>
    </reaction>
</comment>
<comment type="subunit">
    <text>Dimer of identical or non-identical chains. With MM being the major form in skeletal muscle and myocardium, MB existing in myocardium, and BB existing in many tissues, especially brain.</text>
</comment>
<comment type="subcellular location">
    <subcellularLocation>
        <location>Cytoplasm</location>
    </subcellularLocation>
</comment>
<comment type="miscellaneous">
    <text>This electric ray muscle-specific creatine kinase (MM isozyme) is isolated from the electric organ, which derives embryologically from skeletal muscle. It may be involved in the electrical discharge process.</text>
</comment>
<comment type="similarity">
    <text evidence="1 2">Belongs to the ATP:guanido phosphotransferase family.</text>
</comment>
<evidence type="ECO:0000255" key="1">
    <source>
        <dbReference type="PROSITE-ProRule" id="PRU00842"/>
    </source>
</evidence>
<evidence type="ECO:0000255" key="2">
    <source>
        <dbReference type="PROSITE-ProRule" id="PRU00843"/>
    </source>
</evidence>
<evidence type="ECO:0000255" key="3">
    <source>
        <dbReference type="PROSITE-ProRule" id="PRU10029"/>
    </source>
</evidence>
<accession>P00566</accession>
<name>KCRM_TORMA</name>
<sequence length="381" mass="42974">MPFGNTHNKWKLNYSAAEEFPDLSKHNNHMAKALTLDIYKKLRDKETPSGFTLDDVIQTGVDNPGHPFIMTVGCVAGDEECYEVFKDLFDPVIEDRHGGYKPTDKHKTDLNQDNLKGGDDLDPNYVLSSRVRTGRSIKGIALPPHCSRGERRLVEKLCIEGLATLTGEFQGKYYPLSTMSDAEQQQLIDDHFLFDKPISPLLLASGMARDWPDGRGIWHNNDKSFLVWVNEEDHLRVISMQKGGNMKEVFRRFCVGLKKIEEIFVKAGRGFMWNEHLGYVLTCPSNLGTGLRGGVHVKIPHLCKHEKFSEVLKRTRLQKRGTGGVDTEAVGSIYDISNADRLGFSEVEQVQMVVDGVKLMVEMEKRLENGKSIDDLIPAQK</sequence>
<protein>
    <recommendedName>
        <fullName>Creatine kinase M-type</fullName>
        <ecNumber>2.7.3.2</ecNumber>
    </recommendedName>
    <alternativeName>
        <fullName>Creatine kinase M chain</fullName>
    </alternativeName>
    <alternativeName>
        <fullName>M-CK</fullName>
    </alternativeName>
    <alternativeName>
        <fullName>NU-2 protein</fullName>
    </alternativeName>
</protein>
<keyword id="KW-0067">ATP-binding</keyword>
<keyword id="KW-0963">Cytoplasm</keyword>
<keyword id="KW-0418">Kinase</keyword>
<keyword id="KW-0547">Nucleotide-binding</keyword>
<keyword id="KW-0808">Transferase</keyword>
<dbReference type="EC" id="2.7.3.2"/>
<dbReference type="EMBL" id="M11508">
    <property type="protein sequence ID" value="AAA49277.1"/>
    <property type="molecule type" value="mRNA"/>
</dbReference>
<dbReference type="PIR" id="A00676">
    <property type="entry name" value="KIRYCM"/>
</dbReference>
<dbReference type="SMR" id="P00566"/>
<dbReference type="GO" id="GO:0005737">
    <property type="term" value="C:cytoplasm"/>
    <property type="evidence" value="ECO:0007669"/>
    <property type="project" value="UniProtKB-SubCell"/>
</dbReference>
<dbReference type="GO" id="GO:0005615">
    <property type="term" value="C:extracellular space"/>
    <property type="evidence" value="ECO:0007669"/>
    <property type="project" value="TreeGrafter"/>
</dbReference>
<dbReference type="GO" id="GO:0005524">
    <property type="term" value="F:ATP binding"/>
    <property type="evidence" value="ECO:0007669"/>
    <property type="project" value="UniProtKB-KW"/>
</dbReference>
<dbReference type="GO" id="GO:0004111">
    <property type="term" value="F:creatine kinase activity"/>
    <property type="evidence" value="ECO:0007669"/>
    <property type="project" value="UniProtKB-EC"/>
</dbReference>
<dbReference type="GO" id="GO:0046314">
    <property type="term" value="P:phosphocreatine biosynthetic process"/>
    <property type="evidence" value="ECO:0007669"/>
    <property type="project" value="InterPro"/>
</dbReference>
<dbReference type="CDD" id="cd00716">
    <property type="entry name" value="creatine_kinase_like"/>
    <property type="match status" value="1"/>
</dbReference>
<dbReference type="FunFam" id="3.30.590.10:FF:000026">
    <property type="entry name" value="Creatine kinase B-type"/>
    <property type="match status" value="1"/>
</dbReference>
<dbReference type="FunFam" id="1.10.135.10:FF:000001">
    <property type="entry name" value="Creatine kinase M-type"/>
    <property type="match status" value="1"/>
</dbReference>
<dbReference type="Gene3D" id="1.10.135.10">
    <property type="entry name" value="ATP:guanido phosphotransferase, N-terminal domain"/>
    <property type="match status" value="1"/>
</dbReference>
<dbReference type="Gene3D" id="3.30.590.10">
    <property type="entry name" value="Glutamine synthetase/guanido kinase, catalytic domain"/>
    <property type="match status" value="1"/>
</dbReference>
<dbReference type="InterPro" id="IPR000749">
    <property type="entry name" value="ATP-guanido_PTrfase"/>
</dbReference>
<dbReference type="InterPro" id="IPR022415">
    <property type="entry name" value="ATP-guanido_PTrfase_AS"/>
</dbReference>
<dbReference type="InterPro" id="IPR022414">
    <property type="entry name" value="ATP-guanido_PTrfase_cat"/>
</dbReference>
<dbReference type="InterPro" id="IPR022413">
    <property type="entry name" value="ATP-guanido_PTrfase_N"/>
</dbReference>
<dbReference type="InterPro" id="IPR036802">
    <property type="entry name" value="ATP-guanido_PTrfase_N_sf"/>
</dbReference>
<dbReference type="InterPro" id="IPR014746">
    <property type="entry name" value="Gln_synth/guanido_kin_cat_dom"/>
</dbReference>
<dbReference type="PANTHER" id="PTHR11547">
    <property type="entry name" value="ARGININE OR CREATINE KINASE"/>
    <property type="match status" value="1"/>
</dbReference>
<dbReference type="PANTHER" id="PTHR11547:SF63">
    <property type="entry name" value="CREATINE KINASE M-TYPE"/>
    <property type="match status" value="1"/>
</dbReference>
<dbReference type="Pfam" id="PF00217">
    <property type="entry name" value="ATP-gua_Ptrans"/>
    <property type="match status" value="1"/>
</dbReference>
<dbReference type="Pfam" id="PF02807">
    <property type="entry name" value="ATP-gua_PtransN"/>
    <property type="match status" value="1"/>
</dbReference>
<dbReference type="SUPFAM" id="SSF55931">
    <property type="entry name" value="Glutamine synthetase/guanido kinase"/>
    <property type="match status" value="1"/>
</dbReference>
<dbReference type="SUPFAM" id="SSF48034">
    <property type="entry name" value="Guanido kinase N-terminal domain"/>
    <property type="match status" value="1"/>
</dbReference>
<dbReference type="PROSITE" id="PS00112">
    <property type="entry name" value="PHOSPHAGEN_KINASE"/>
    <property type="match status" value="1"/>
</dbReference>
<dbReference type="PROSITE" id="PS51510">
    <property type="entry name" value="PHOSPHAGEN_KINASE_C"/>
    <property type="match status" value="1"/>
</dbReference>
<dbReference type="PROSITE" id="PS51509">
    <property type="entry name" value="PHOSPHAGEN_KINASE_N"/>
    <property type="match status" value="1"/>
</dbReference>
<proteinExistence type="evidence at transcript level"/>
<organism>
    <name type="scientific">Torpedo marmorata</name>
    <name type="common">Marbled electric ray</name>
    <dbReference type="NCBI Taxonomy" id="7788"/>
    <lineage>
        <taxon>Eukaryota</taxon>
        <taxon>Metazoa</taxon>
        <taxon>Chordata</taxon>
        <taxon>Craniata</taxon>
        <taxon>Vertebrata</taxon>
        <taxon>Chondrichthyes</taxon>
        <taxon>Elasmobranchii</taxon>
        <taxon>Batoidea</taxon>
        <taxon>Torpediniformes</taxon>
        <taxon>Torpedinidae</taxon>
        <taxon>Torpedo</taxon>
    </lineage>
</organism>
<reference key="1">
    <citation type="journal article" date="1984" name="Proc. Natl. Acad. Sci. U.S.A.">
        <title>Complete nucleotide sequence of Torpedo marmorata mRNA coding for the 43,000-dalton nu 2 protein: muscle-specific creatine kinase.</title>
        <authorList>
            <person name="Giraudat J."/>
            <person name="Devillers-Thiery A."/>
            <person name="Perriard J.-C."/>
            <person name="Changeux J.-P."/>
        </authorList>
    </citation>
    <scope>NUCLEOTIDE SEQUENCE [MRNA]</scope>
    <source>
        <tissue>Electric organ</tissue>
    </source>
</reference>
<feature type="chain" id="PRO_0000211982" description="Creatine kinase M-type">
    <location>
        <begin position="1"/>
        <end position="381"/>
    </location>
</feature>
<feature type="domain" description="Phosphagen kinase N-terminal" evidence="1">
    <location>
        <begin position="11"/>
        <end position="98"/>
    </location>
</feature>
<feature type="domain" description="Phosphagen kinase C-terminal" evidence="2">
    <location>
        <begin position="125"/>
        <end position="367"/>
    </location>
</feature>
<feature type="binding site" evidence="2">
    <location>
        <begin position="128"/>
        <end position="132"/>
    </location>
    <ligand>
        <name>ATP</name>
        <dbReference type="ChEBI" id="CHEBI:30616"/>
    </ligand>
</feature>
<feature type="binding site" evidence="2">
    <location>
        <position position="191"/>
    </location>
    <ligand>
        <name>ATP</name>
        <dbReference type="ChEBI" id="CHEBI:30616"/>
    </ligand>
</feature>
<feature type="binding site" evidence="2">
    <location>
        <position position="236"/>
    </location>
    <ligand>
        <name>ATP</name>
        <dbReference type="ChEBI" id="CHEBI:30616"/>
    </ligand>
</feature>
<feature type="binding site" evidence="2">
    <location>
        <position position="292"/>
    </location>
    <ligand>
        <name>ATP</name>
        <dbReference type="ChEBI" id="CHEBI:30616"/>
    </ligand>
</feature>
<feature type="binding site" evidence="2">
    <location>
        <begin position="320"/>
        <end position="325"/>
    </location>
    <ligand>
        <name>ATP</name>
        <dbReference type="ChEBI" id="CHEBI:30616"/>
    </ligand>
</feature>
<feature type="binding site" evidence="2">
    <location>
        <position position="335"/>
    </location>
    <ligand>
        <name>ATP</name>
        <dbReference type="ChEBI" id="CHEBI:30616"/>
    </ligand>
</feature>